<reference key="1">
    <citation type="journal article" date="2013" name="Biochem. Pharmacol.">
        <title>Isolation and characterization of alpha-conotoxin LsIA with potent activity at nicotinic acetylcholine receptors.</title>
        <authorList>
            <person name="Inserra M.C."/>
            <person name="Kompella S.N."/>
            <person name="Vetter I."/>
            <person name="Brust A."/>
            <person name="Daly N.L."/>
            <person name="Cuny H."/>
            <person name="Craik D.J."/>
            <person name="Alewood P.F."/>
            <person name="Adams D.J."/>
            <person name="Lewis R.J."/>
        </authorList>
    </citation>
    <scope>PROTEIN SEQUENCE</scope>
    <scope>FUNCTION</scope>
    <scope>MASS SPECTROMETRY</scope>
    <scope>SUBCELLULAR LOCATION</scope>
    <scope>SYNTHESIS</scope>
    <scope>AMIDATION AT CYS-17</scope>
    <scope>MUTAGENESIS OF SER-1 AND 1-SER-GLY-2</scope>
    <scope>STRUCTURE BY NMR</scope>
    <scope>DISULFIDE BOND</scope>
    <source>
        <tissue>Venom</tissue>
    </source>
</reference>
<reference key="2">
    <citation type="journal article" date="2021" name="Sci. Rep.">
        <title>Rigidity of loop 1 contributes to equipotency of globular and ribbon isomers of alpha-conotoxin AusIA.</title>
        <authorList>
            <person name="Ho T.N.T."/>
            <person name="Abraham N."/>
            <person name="Lewis R.J."/>
        </authorList>
    </citation>
    <scope>FUNCTION</scope>
    <scope>MUTAGENESIS OF SER-5 AND ASN-6</scope>
</reference>
<proteinExistence type="evidence at protein level"/>
<evidence type="ECO:0000250" key="1">
    <source>
        <dbReference type="UniProtKB" id="P56636"/>
    </source>
</evidence>
<evidence type="ECO:0000269" key="2">
    <source>
    </source>
</evidence>
<evidence type="ECO:0000269" key="3">
    <source>
    </source>
</evidence>
<evidence type="ECO:0000303" key="4">
    <source>
    </source>
</evidence>
<evidence type="ECO:0000305" key="5"/>
<evidence type="ECO:0000305" key="6">
    <source>
    </source>
</evidence>
<comment type="function">
    <text evidence="2 3">Alpha-conotoxins act on postsynaptic membranes, they bind to the nicotinic acetylcholine receptors (nAChR) and thus inhibit them. This globular toxin inhibits human alpha-7/CHRNA7 (IC(50)=0.3-10.1 nM), rat alpha-3-beta-2/CHRNA3-CHRNB2 (IC(50)=10.3 nM) and rat alpha-3-alpha-5-beta-2/CHRNA3-CHRNB5-CHRNB2 (IC(50)=31.2 nM).</text>
</comment>
<comment type="subcellular location">
    <subcellularLocation>
        <location evidence="2">Secreted</location>
    </subcellularLocation>
</comment>
<comment type="tissue specificity">
    <text evidence="6">Expressed by the venom duct.</text>
</comment>
<comment type="domain">
    <text evidence="5">The cysteine framework is I (CC-C-C). Alpha4/7 pattern.</text>
</comment>
<comment type="PTM">
    <text evidence="2">Amidation at Cys-17 plays a critical role, since a C-terminally carboxylated analog is 3-fold less potent at the alpha-7/CHRNA7 nAChR subtype and 3-fold more potent at the alpha-3-beta-2/CHRNA3-CHRNB2 subtype.</text>
</comment>
<comment type="mass spectrometry" mass="1746.6" method="MALDI" evidence="2"/>
<comment type="miscellaneous">
    <text evidence="2">Negative results: shows a weak inhibition of alpha-3-beta-4/CHRNA3-CHRNB4 nAChR and does not inhibit alpha-9-alpha-10/CHRNA9-CHRNA10, alpha-4-beta-2/CHRNA4-CHRNB2 and alpha-4-beta-4/CHRNA4-CHRNB4 nAChR.</text>
</comment>
<comment type="miscellaneous">
    <text evidence="3">The synthetic ribbon toxin is much less potent that the globular toxin (IC(50)=41 nM compared to 0.3 nM).</text>
</comment>
<comment type="similarity">
    <text evidence="5">Belongs to the conotoxin A superfamily.</text>
</comment>
<sequence length="17" mass="1752">SGCCSNPACRVNNPNIC</sequence>
<protein>
    <recommendedName>
        <fullName evidence="4">Alpha-conotoxin LsIA</fullName>
    </recommendedName>
</protein>
<feature type="peptide" id="PRO_0000439831" description="Alpha-conotoxin LsIA" evidence="2">
    <location>
        <begin position="1"/>
        <end position="17"/>
    </location>
</feature>
<feature type="region of interest" description="Ser-Xaa-Pro motif, crucial for potent interaction with nAChR" evidence="1">
    <location>
        <begin position="5"/>
        <end position="7"/>
    </location>
</feature>
<feature type="modified residue" description="Cysteine amide" evidence="2">
    <location>
        <position position="17"/>
    </location>
</feature>
<feature type="disulfide bond" evidence="2">
    <location>
        <begin position="3"/>
        <end position="9"/>
    </location>
</feature>
<feature type="disulfide bond" evidence="2">
    <location>
        <begin position="4"/>
        <end position="17"/>
    </location>
</feature>
<feature type="mutagenesis site" description="9-fold and 4.4-fold decrease in ability to inhibit alpha-3-beta-2/CHRNA3-CHRNB2 and alpha-7/CHRNA7 nAChR subunits, respectively." evidence="2">
    <location>
        <begin position="1"/>
        <end position="2"/>
    </location>
</feature>
<feature type="mutagenesis site" description="5.5-fold and 2.3-fold decrease in potency at alpha-3-beta-2/CHRNA3-CHRNB2 and alpha-7/CHRNA7 nAChR subunits, respectively." evidence="2">
    <location>
        <position position="1"/>
    </location>
</feature>
<feature type="mutagenesis site" description="160-fold decrease in ability to inhibit alpha-7/CHRNA7 nAChR subunit." evidence="3">
    <original>S</original>
    <variation>AS</variation>
    <location>
        <position position="5"/>
    </location>
</feature>
<feature type="mutagenesis site" description="No change in ability to inhibit alpha-7/CHRNA7 nAChR subunit." evidence="3">
    <original>S</original>
    <variation>R</variation>
    <location>
        <position position="5"/>
    </location>
</feature>
<feature type="mutagenesis site" description="26-fold decrease in ability to inhibit alpha-7/CHRNA7 nAChR subunit." evidence="3">
    <original>N</original>
    <variation>RN</variation>
    <location>
        <position position="6"/>
    </location>
</feature>
<organism>
    <name type="scientific">Conus limpusi</name>
    <name type="common">Cone snail</name>
    <dbReference type="NCBI Taxonomy" id="1967283"/>
    <lineage>
        <taxon>Eukaryota</taxon>
        <taxon>Metazoa</taxon>
        <taxon>Spiralia</taxon>
        <taxon>Lophotrochozoa</taxon>
        <taxon>Mollusca</taxon>
        <taxon>Gastropoda</taxon>
        <taxon>Caenogastropoda</taxon>
        <taxon>Neogastropoda</taxon>
        <taxon>Conoidea</taxon>
        <taxon>Conidae</taxon>
        <taxon>Conus</taxon>
        <taxon>Eremiconus</taxon>
    </lineage>
</organism>
<accession>P0DL68</accession>
<name>CA1A_CONLM</name>
<keyword id="KW-0008">Acetylcholine receptor inhibiting toxin</keyword>
<keyword id="KW-0027">Amidation</keyword>
<keyword id="KW-0903">Direct protein sequencing</keyword>
<keyword id="KW-1015">Disulfide bond</keyword>
<keyword id="KW-0528">Neurotoxin</keyword>
<keyword id="KW-0629">Postsynaptic neurotoxin</keyword>
<keyword id="KW-0964">Secreted</keyword>
<keyword id="KW-0800">Toxin</keyword>
<dbReference type="GO" id="GO:0005576">
    <property type="term" value="C:extracellular region"/>
    <property type="evidence" value="ECO:0007669"/>
    <property type="project" value="UniProtKB-SubCell"/>
</dbReference>
<dbReference type="GO" id="GO:0035792">
    <property type="term" value="C:host cell postsynaptic membrane"/>
    <property type="evidence" value="ECO:0007669"/>
    <property type="project" value="UniProtKB-KW"/>
</dbReference>
<dbReference type="GO" id="GO:0030550">
    <property type="term" value="F:acetylcholine receptor inhibitor activity"/>
    <property type="evidence" value="ECO:0007669"/>
    <property type="project" value="UniProtKB-KW"/>
</dbReference>
<dbReference type="GO" id="GO:0090729">
    <property type="term" value="F:toxin activity"/>
    <property type="evidence" value="ECO:0007669"/>
    <property type="project" value="UniProtKB-KW"/>
</dbReference>
<dbReference type="InterPro" id="IPR009958">
    <property type="entry name" value="Conotoxin_a-typ"/>
</dbReference>
<dbReference type="InterPro" id="IPR018072">
    <property type="entry name" value="Conotoxin_a-typ_CS"/>
</dbReference>
<dbReference type="Pfam" id="PF07365">
    <property type="entry name" value="Toxin_8"/>
    <property type="match status" value="1"/>
</dbReference>
<dbReference type="PROSITE" id="PS60014">
    <property type="entry name" value="ALPHA_CONOTOXIN"/>
    <property type="match status" value="1"/>
</dbReference>